<protein>
    <recommendedName>
        <fullName evidence="1">Shikimate dehydrogenase (NADP(+))</fullName>
        <shortName evidence="1">SDH</shortName>
        <ecNumber evidence="1">1.1.1.25</ecNumber>
    </recommendedName>
</protein>
<organism>
    <name type="scientific">Escherichia coli O7:K1 (strain IAI39 / ExPEC)</name>
    <dbReference type="NCBI Taxonomy" id="585057"/>
    <lineage>
        <taxon>Bacteria</taxon>
        <taxon>Pseudomonadati</taxon>
        <taxon>Pseudomonadota</taxon>
        <taxon>Gammaproteobacteria</taxon>
        <taxon>Enterobacterales</taxon>
        <taxon>Enterobacteriaceae</taxon>
        <taxon>Escherichia</taxon>
    </lineage>
</organism>
<feature type="chain" id="PRO_1000118875" description="Shikimate dehydrogenase (NADP(+))">
    <location>
        <begin position="1"/>
        <end position="272"/>
    </location>
</feature>
<feature type="active site" description="Proton acceptor" evidence="1">
    <location>
        <position position="65"/>
    </location>
</feature>
<feature type="binding site" evidence="1">
    <location>
        <begin position="14"/>
        <end position="16"/>
    </location>
    <ligand>
        <name>shikimate</name>
        <dbReference type="ChEBI" id="CHEBI:36208"/>
    </ligand>
</feature>
<feature type="binding site" evidence="1">
    <location>
        <position position="61"/>
    </location>
    <ligand>
        <name>shikimate</name>
        <dbReference type="ChEBI" id="CHEBI:36208"/>
    </ligand>
</feature>
<feature type="binding site" evidence="1">
    <location>
        <position position="77"/>
    </location>
    <ligand>
        <name>NADP(+)</name>
        <dbReference type="ChEBI" id="CHEBI:58349"/>
    </ligand>
</feature>
<feature type="binding site" evidence="1">
    <location>
        <position position="86"/>
    </location>
    <ligand>
        <name>shikimate</name>
        <dbReference type="ChEBI" id="CHEBI:36208"/>
    </ligand>
</feature>
<feature type="binding site" evidence="1">
    <location>
        <position position="102"/>
    </location>
    <ligand>
        <name>shikimate</name>
        <dbReference type="ChEBI" id="CHEBI:36208"/>
    </ligand>
</feature>
<feature type="binding site" evidence="1">
    <location>
        <begin position="126"/>
        <end position="130"/>
    </location>
    <ligand>
        <name>NADP(+)</name>
        <dbReference type="ChEBI" id="CHEBI:58349"/>
    </ligand>
</feature>
<feature type="binding site" evidence="1">
    <location>
        <begin position="149"/>
        <end position="154"/>
    </location>
    <ligand>
        <name>NADP(+)</name>
        <dbReference type="ChEBI" id="CHEBI:58349"/>
    </ligand>
</feature>
<feature type="binding site" evidence="1">
    <location>
        <position position="213"/>
    </location>
    <ligand>
        <name>NADP(+)</name>
        <dbReference type="ChEBI" id="CHEBI:58349"/>
    </ligand>
</feature>
<feature type="binding site" evidence="1">
    <location>
        <position position="215"/>
    </location>
    <ligand>
        <name>shikimate</name>
        <dbReference type="ChEBI" id="CHEBI:36208"/>
    </ligand>
</feature>
<feature type="binding site" evidence="1">
    <location>
        <position position="237"/>
    </location>
    <ligand>
        <name>NADP(+)</name>
        <dbReference type="ChEBI" id="CHEBI:58349"/>
    </ligand>
</feature>
<accession>B7NLK0</accession>
<evidence type="ECO:0000255" key="1">
    <source>
        <dbReference type="HAMAP-Rule" id="MF_00222"/>
    </source>
</evidence>
<proteinExistence type="inferred from homology"/>
<dbReference type="EC" id="1.1.1.25" evidence="1"/>
<dbReference type="EMBL" id="CU928164">
    <property type="protein sequence ID" value="CAR19889.1"/>
    <property type="molecule type" value="Genomic_DNA"/>
</dbReference>
<dbReference type="RefSeq" id="WP_000451226.1">
    <property type="nucleotide sequence ID" value="NC_011750.1"/>
</dbReference>
<dbReference type="RefSeq" id="YP_002409674.1">
    <property type="nucleotide sequence ID" value="NC_011750.1"/>
</dbReference>
<dbReference type="SMR" id="B7NLK0"/>
<dbReference type="STRING" id="585057.ECIAI39_3775"/>
<dbReference type="KEGG" id="ect:ECIAI39_3775"/>
<dbReference type="PATRIC" id="fig|585057.6.peg.3912"/>
<dbReference type="HOGENOM" id="CLU_044063_2_1_6"/>
<dbReference type="UniPathway" id="UPA00053">
    <property type="reaction ID" value="UER00087"/>
</dbReference>
<dbReference type="Proteomes" id="UP000000749">
    <property type="component" value="Chromosome"/>
</dbReference>
<dbReference type="GO" id="GO:0005829">
    <property type="term" value="C:cytosol"/>
    <property type="evidence" value="ECO:0007669"/>
    <property type="project" value="TreeGrafter"/>
</dbReference>
<dbReference type="GO" id="GO:0050661">
    <property type="term" value="F:NADP binding"/>
    <property type="evidence" value="ECO:0007669"/>
    <property type="project" value="InterPro"/>
</dbReference>
<dbReference type="GO" id="GO:0004764">
    <property type="term" value="F:shikimate 3-dehydrogenase (NADP+) activity"/>
    <property type="evidence" value="ECO:0007669"/>
    <property type="project" value="UniProtKB-UniRule"/>
</dbReference>
<dbReference type="GO" id="GO:0008652">
    <property type="term" value="P:amino acid biosynthetic process"/>
    <property type="evidence" value="ECO:0007669"/>
    <property type="project" value="UniProtKB-KW"/>
</dbReference>
<dbReference type="GO" id="GO:0009073">
    <property type="term" value="P:aromatic amino acid family biosynthetic process"/>
    <property type="evidence" value="ECO:0007669"/>
    <property type="project" value="UniProtKB-KW"/>
</dbReference>
<dbReference type="GO" id="GO:0009423">
    <property type="term" value="P:chorismate biosynthetic process"/>
    <property type="evidence" value="ECO:0007669"/>
    <property type="project" value="UniProtKB-UniRule"/>
</dbReference>
<dbReference type="GO" id="GO:0019632">
    <property type="term" value="P:shikimate metabolic process"/>
    <property type="evidence" value="ECO:0007669"/>
    <property type="project" value="InterPro"/>
</dbReference>
<dbReference type="CDD" id="cd01065">
    <property type="entry name" value="NAD_bind_Shikimate_DH"/>
    <property type="match status" value="1"/>
</dbReference>
<dbReference type="FunFam" id="3.40.50.10860:FF:000006">
    <property type="entry name" value="Shikimate dehydrogenase (NADP(+))"/>
    <property type="match status" value="1"/>
</dbReference>
<dbReference type="FunFam" id="3.40.50.720:FF:000104">
    <property type="entry name" value="Shikimate dehydrogenase (NADP(+))"/>
    <property type="match status" value="1"/>
</dbReference>
<dbReference type="Gene3D" id="3.40.50.10860">
    <property type="entry name" value="Leucine Dehydrogenase, chain A, domain 1"/>
    <property type="match status" value="1"/>
</dbReference>
<dbReference type="Gene3D" id="3.40.50.720">
    <property type="entry name" value="NAD(P)-binding Rossmann-like Domain"/>
    <property type="match status" value="1"/>
</dbReference>
<dbReference type="HAMAP" id="MF_00222">
    <property type="entry name" value="Shikimate_DH_AroE"/>
    <property type="match status" value="1"/>
</dbReference>
<dbReference type="InterPro" id="IPR046346">
    <property type="entry name" value="Aminoacid_DH-like_N_sf"/>
</dbReference>
<dbReference type="InterPro" id="IPR036291">
    <property type="entry name" value="NAD(P)-bd_dom_sf"/>
</dbReference>
<dbReference type="InterPro" id="IPR041121">
    <property type="entry name" value="SDH_C"/>
</dbReference>
<dbReference type="InterPro" id="IPR011342">
    <property type="entry name" value="Shikimate_DH"/>
</dbReference>
<dbReference type="InterPro" id="IPR013708">
    <property type="entry name" value="Shikimate_DH-bd_N"/>
</dbReference>
<dbReference type="InterPro" id="IPR022893">
    <property type="entry name" value="Shikimate_DH_fam"/>
</dbReference>
<dbReference type="InterPro" id="IPR006151">
    <property type="entry name" value="Shikm_DH/Glu-tRNA_Rdtase"/>
</dbReference>
<dbReference type="NCBIfam" id="TIGR00507">
    <property type="entry name" value="aroE"/>
    <property type="match status" value="1"/>
</dbReference>
<dbReference type="NCBIfam" id="NF001310">
    <property type="entry name" value="PRK00258.1-2"/>
    <property type="match status" value="1"/>
</dbReference>
<dbReference type="PANTHER" id="PTHR21089:SF1">
    <property type="entry name" value="BIFUNCTIONAL 3-DEHYDROQUINATE DEHYDRATASE_SHIKIMATE DEHYDROGENASE, CHLOROPLASTIC"/>
    <property type="match status" value="1"/>
</dbReference>
<dbReference type="PANTHER" id="PTHR21089">
    <property type="entry name" value="SHIKIMATE DEHYDROGENASE"/>
    <property type="match status" value="1"/>
</dbReference>
<dbReference type="Pfam" id="PF18317">
    <property type="entry name" value="SDH_C"/>
    <property type="match status" value="1"/>
</dbReference>
<dbReference type="Pfam" id="PF01488">
    <property type="entry name" value="Shikimate_DH"/>
    <property type="match status" value="1"/>
</dbReference>
<dbReference type="Pfam" id="PF08501">
    <property type="entry name" value="Shikimate_dh_N"/>
    <property type="match status" value="1"/>
</dbReference>
<dbReference type="SUPFAM" id="SSF53223">
    <property type="entry name" value="Aminoacid dehydrogenase-like, N-terminal domain"/>
    <property type="match status" value="1"/>
</dbReference>
<dbReference type="SUPFAM" id="SSF51735">
    <property type="entry name" value="NAD(P)-binding Rossmann-fold domains"/>
    <property type="match status" value="1"/>
</dbReference>
<sequence length="272" mass="29326">METYAVFGNPIAHSKSPFIHQQFAQQLNIEHPYGRVLAPINDFINTLNAFFSAGGKGANVTVPFKEEAFARADELTERAALAGAVNTLKRLEDGRLLGDNTDGIGLLSDLERLSFIRPGLRILLIGAGGASRGVLLPLLSLDCAVTITNRTVSRAEELAKLFAHTGSIQALGMDELEGHEFDLIINATSSGISGDIPAIPASLIHSGMCCYDMFYQKGKTPFLAWCELRGSKRNADGLGMLVAQAAHAFLLWHGVLPDIEPVIKQLQEELSA</sequence>
<name>AROE_ECO7I</name>
<gene>
    <name evidence="1" type="primary">aroE</name>
    <name type="ordered locus">ECIAI39_3775</name>
</gene>
<keyword id="KW-0028">Amino-acid biosynthesis</keyword>
<keyword id="KW-0057">Aromatic amino acid biosynthesis</keyword>
<keyword id="KW-0521">NADP</keyword>
<keyword id="KW-0560">Oxidoreductase</keyword>
<reference key="1">
    <citation type="journal article" date="2009" name="PLoS Genet.">
        <title>Organised genome dynamics in the Escherichia coli species results in highly diverse adaptive paths.</title>
        <authorList>
            <person name="Touchon M."/>
            <person name="Hoede C."/>
            <person name="Tenaillon O."/>
            <person name="Barbe V."/>
            <person name="Baeriswyl S."/>
            <person name="Bidet P."/>
            <person name="Bingen E."/>
            <person name="Bonacorsi S."/>
            <person name="Bouchier C."/>
            <person name="Bouvet O."/>
            <person name="Calteau A."/>
            <person name="Chiapello H."/>
            <person name="Clermont O."/>
            <person name="Cruveiller S."/>
            <person name="Danchin A."/>
            <person name="Diard M."/>
            <person name="Dossat C."/>
            <person name="Karoui M.E."/>
            <person name="Frapy E."/>
            <person name="Garry L."/>
            <person name="Ghigo J.M."/>
            <person name="Gilles A.M."/>
            <person name="Johnson J."/>
            <person name="Le Bouguenec C."/>
            <person name="Lescat M."/>
            <person name="Mangenot S."/>
            <person name="Martinez-Jehanne V."/>
            <person name="Matic I."/>
            <person name="Nassif X."/>
            <person name="Oztas S."/>
            <person name="Petit M.A."/>
            <person name="Pichon C."/>
            <person name="Rouy Z."/>
            <person name="Ruf C.S."/>
            <person name="Schneider D."/>
            <person name="Tourret J."/>
            <person name="Vacherie B."/>
            <person name="Vallenet D."/>
            <person name="Medigue C."/>
            <person name="Rocha E.P.C."/>
            <person name="Denamur E."/>
        </authorList>
    </citation>
    <scope>NUCLEOTIDE SEQUENCE [LARGE SCALE GENOMIC DNA]</scope>
    <source>
        <strain>IAI39 / ExPEC</strain>
    </source>
</reference>
<comment type="function">
    <text evidence="1">Involved in the biosynthesis of the chorismate, which leads to the biosynthesis of aromatic amino acids. Catalyzes the reversible NADPH linked reduction of 3-dehydroshikimate (DHSA) to yield shikimate (SA).</text>
</comment>
<comment type="catalytic activity">
    <reaction evidence="1">
        <text>shikimate + NADP(+) = 3-dehydroshikimate + NADPH + H(+)</text>
        <dbReference type="Rhea" id="RHEA:17737"/>
        <dbReference type="ChEBI" id="CHEBI:15378"/>
        <dbReference type="ChEBI" id="CHEBI:16630"/>
        <dbReference type="ChEBI" id="CHEBI:36208"/>
        <dbReference type="ChEBI" id="CHEBI:57783"/>
        <dbReference type="ChEBI" id="CHEBI:58349"/>
        <dbReference type="EC" id="1.1.1.25"/>
    </reaction>
</comment>
<comment type="pathway">
    <text evidence="1">Metabolic intermediate biosynthesis; chorismate biosynthesis; chorismate from D-erythrose 4-phosphate and phosphoenolpyruvate: step 4/7.</text>
</comment>
<comment type="subunit">
    <text evidence="1">Homodimer.</text>
</comment>
<comment type="similarity">
    <text evidence="1">Belongs to the shikimate dehydrogenase family.</text>
</comment>